<comment type="similarity">
    <text evidence="1">Belongs to the universal ribosomal protein uL29 family.</text>
</comment>
<sequence length="63" mass="7190">MKATELRDKSAQQLNEQLLELLRDQFNLRMQKATGQLGQSHLLSQVKRDIARVKTVLSQQAGK</sequence>
<keyword id="KW-0687">Ribonucleoprotein</keyword>
<keyword id="KW-0689">Ribosomal protein</keyword>
<accession>A4XZ82</accession>
<evidence type="ECO:0000255" key="1">
    <source>
        <dbReference type="HAMAP-Rule" id="MF_00374"/>
    </source>
</evidence>
<evidence type="ECO:0000305" key="2"/>
<dbReference type="EMBL" id="CP000680">
    <property type="protein sequence ID" value="ABP86648.1"/>
    <property type="molecule type" value="Genomic_DNA"/>
</dbReference>
<dbReference type="SMR" id="A4XZ82"/>
<dbReference type="STRING" id="399739.Pmen_3901"/>
<dbReference type="KEGG" id="pmy:Pmen_3901"/>
<dbReference type="PATRIC" id="fig|399739.8.peg.3954"/>
<dbReference type="eggNOG" id="COG0255">
    <property type="taxonomic scope" value="Bacteria"/>
</dbReference>
<dbReference type="HOGENOM" id="CLU_158491_1_2_6"/>
<dbReference type="OrthoDB" id="9815192at2"/>
<dbReference type="GO" id="GO:0022625">
    <property type="term" value="C:cytosolic large ribosomal subunit"/>
    <property type="evidence" value="ECO:0007669"/>
    <property type="project" value="TreeGrafter"/>
</dbReference>
<dbReference type="GO" id="GO:0003735">
    <property type="term" value="F:structural constituent of ribosome"/>
    <property type="evidence" value="ECO:0007669"/>
    <property type="project" value="InterPro"/>
</dbReference>
<dbReference type="GO" id="GO:0006412">
    <property type="term" value="P:translation"/>
    <property type="evidence" value="ECO:0007669"/>
    <property type="project" value="UniProtKB-UniRule"/>
</dbReference>
<dbReference type="CDD" id="cd00427">
    <property type="entry name" value="Ribosomal_L29_HIP"/>
    <property type="match status" value="1"/>
</dbReference>
<dbReference type="FunFam" id="1.10.287.310:FF:000001">
    <property type="entry name" value="50S ribosomal protein L29"/>
    <property type="match status" value="1"/>
</dbReference>
<dbReference type="Gene3D" id="1.10.287.310">
    <property type="match status" value="1"/>
</dbReference>
<dbReference type="HAMAP" id="MF_00374">
    <property type="entry name" value="Ribosomal_uL29"/>
    <property type="match status" value="1"/>
</dbReference>
<dbReference type="InterPro" id="IPR050063">
    <property type="entry name" value="Ribosomal_protein_uL29"/>
</dbReference>
<dbReference type="InterPro" id="IPR001854">
    <property type="entry name" value="Ribosomal_uL29"/>
</dbReference>
<dbReference type="InterPro" id="IPR018254">
    <property type="entry name" value="Ribosomal_uL29_CS"/>
</dbReference>
<dbReference type="InterPro" id="IPR036049">
    <property type="entry name" value="Ribosomal_uL29_sf"/>
</dbReference>
<dbReference type="NCBIfam" id="TIGR00012">
    <property type="entry name" value="L29"/>
    <property type="match status" value="1"/>
</dbReference>
<dbReference type="PANTHER" id="PTHR10916">
    <property type="entry name" value="60S RIBOSOMAL PROTEIN L35/50S RIBOSOMAL PROTEIN L29"/>
    <property type="match status" value="1"/>
</dbReference>
<dbReference type="PANTHER" id="PTHR10916:SF0">
    <property type="entry name" value="LARGE RIBOSOMAL SUBUNIT PROTEIN UL29C"/>
    <property type="match status" value="1"/>
</dbReference>
<dbReference type="Pfam" id="PF00831">
    <property type="entry name" value="Ribosomal_L29"/>
    <property type="match status" value="1"/>
</dbReference>
<dbReference type="SUPFAM" id="SSF46561">
    <property type="entry name" value="Ribosomal protein L29 (L29p)"/>
    <property type="match status" value="1"/>
</dbReference>
<dbReference type="PROSITE" id="PS00579">
    <property type="entry name" value="RIBOSOMAL_L29"/>
    <property type="match status" value="1"/>
</dbReference>
<feature type="chain" id="PRO_1000007566" description="Large ribosomal subunit protein uL29">
    <location>
        <begin position="1"/>
        <end position="63"/>
    </location>
</feature>
<gene>
    <name evidence="1" type="primary">rpmC</name>
    <name type="ordered locus">Pmen_3901</name>
</gene>
<reference key="1">
    <citation type="submission" date="2007-04" db="EMBL/GenBank/DDBJ databases">
        <title>Complete sequence of Pseudomonas mendocina ymp.</title>
        <authorList>
            <consortium name="US DOE Joint Genome Institute"/>
            <person name="Copeland A."/>
            <person name="Lucas S."/>
            <person name="Lapidus A."/>
            <person name="Barry K."/>
            <person name="Glavina del Rio T."/>
            <person name="Dalin E."/>
            <person name="Tice H."/>
            <person name="Pitluck S."/>
            <person name="Kiss H."/>
            <person name="Brettin T."/>
            <person name="Detter J.C."/>
            <person name="Bruce D."/>
            <person name="Han C."/>
            <person name="Schmutz J."/>
            <person name="Larimer F."/>
            <person name="Land M."/>
            <person name="Hauser L."/>
            <person name="Kyrpides N."/>
            <person name="Mikhailova N."/>
            <person name="Hersman L."/>
            <person name="Dubois J."/>
            <person name="Maurice P."/>
            <person name="Richardson P."/>
        </authorList>
    </citation>
    <scope>NUCLEOTIDE SEQUENCE [LARGE SCALE GENOMIC DNA]</scope>
    <source>
        <strain>ymp</strain>
    </source>
</reference>
<proteinExistence type="inferred from homology"/>
<organism>
    <name type="scientific">Ectopseudomonas mendocina (strain ymp)</name>
    <name type="common">Pseudomonas mendocina</name>
    <dbReference type="NCBI Taxonomy" id="399739"/>
    <lineage>
        <taxon>Bacteria</taxon>
        <taxon>Pseudomonadati</taxon>
        <taxon>Pseudomonadota</taxon>
        <taxon>Gammaproteobacteria</taxon>
        <taxon>Pseudomonadales</taxon>
        <taxon>Pseudomonadaceae</taxon>
        <taxon>Ectopseudomonas</taxon>
    </lineage>
</organism>
<protein>
    <recommendedName>
        <fullName evidence="1">Large ribosomal subunit protein uL29</fullName>
    </recommendedName>
    <alternativeName>
        <fullName evidence="2">50S ribosomal protein L29</fullName>
    </alternativeName>
</protein>
<name>RL29_ECTM1</name>